<evidence type="ECO:0000255" key="1">
    <source>
        <dbReference type="HAMAP-Rule" id="MF_00427"/>
    </source>
</evidence>
<proteinExistence type="inferred from homology"/>
<comment type="function">
    <text evidence="1">NQR complex catalyzes the reduction of ubiquinone-1 to ubiquinol by two successive reactions, coupled with the transport of Na(+) ions from the cytoplasm to the periplasm. NqrA to NqrE are probably involved in the second step, the conversion of ubisemiquinone to ubiquinol.</text>
</comment>
<comment type="catalytic activity">
    <reaction evidence="1">
        <text>a ubiquinone + n Na(+)(in) + NADH + H(+) = a ubiquinol + n Na(+)(out) + NAD(+)</text>
        <dbReference type="Rhea" id="RHEA:47748"/>
        <dbReference type="Rhea" id="RHEA-COMP:9565"/>
        <dbReference type="Rhea" id="RHEA-COMP:9566"/>
        <dbReference type="ChEBI" id="CHEBI:15378"/>
        <dbReference type="ChEBI" id="CHEBI:16389"/>
        <dbReference type="ChEBI" id="CHEBI:17976"/>
        <dbReference type="ChEBI" id="CHEBI:29101"/>
        <dbReference type="ChEBI" id="CHEBI:57540"/>
        <dbReference type="ChEBI" id="CHEBI:57945"/>
        <dbReference type="EC" id="7.2.1.1"/>
    </reaction>
</comment>
<comment type="cofactor">
    <cofactor evidence="1">
        <name>FMN</name>
        <dbReference type="ChEBI" id="CHEBI:58210"/>
    </cofactor>
</comment>
<comment type="subunit">
    <text evidence="1">Composed of six subunits; NqrA, NqrB, NqrC, NqrD, NqrE and NqrF.</text>
</comment>
<comment type="subcellular location">
    <subcellularLocation>
        <location evidence="1">Cell inner membrane</location>
        <topology evidence="1">Single-pass membrane protein</topology>
    </subcellularLocation>
</comment>
<comment type="similarity">
    <text evidence="1">Belongs to the NqrC family.</text>
</comment>
<keyword id="KW-0997">Cell inner membrane</keyword>
<keyword id="KW-1003">Cell membrane</keyword>
<keyword id="KW-0285">Flavoprotein</keyword>
<keyword id="KW-0288">FMN</keyword>
<keyword id="KW-0406">Ion transport</keyword>
<keyword id="KW-0472">Membrane</keyword>
<keyword id="KW-0520">NAD</keyword>
<keyword id="KW-0597">Phosphoprotein</keyword>
<keyword id="KW-0915">Sodium</keyword>
<keyword id="KW-0739">Sodium transport</keyword>
<keyword id="KW-1278">Translocase</keyword>
<keyword id="KW-0812">Transmembrane</keyword>
<keyword id="KW-1133">Transmembrane helix</keyword>
<keyword id="KW-0813">Transport</keyword>
<keyword id="KW-0830">Ubiquinone</keyword>
<organism>
    <name type="scientific">Vibrio parahaemolyticus serotype O3:K6 (strain RIMD 2210633)</name>
    <dbReference type="NCBI Taxonomy" id="223926"/>
    <lineage>
        <taxon>Bacteria</taxon>
        <taxon>Pseudomonadati</taxon>
        <taxon>Pseudomonadota</taxon>
        <taxon>Gammaproteobacteria</taxon>
        <taxon>Vibrionales</taxon>
        <taxon>Vibrionaceae</taxon>
        <taxon>Vibrio</taxon>
    </lineage>
</organism>
<protein>
    <recommendedName>
        <fullName evidence="1">Na(+)-translocating NADH-quinone reductase subunit C</fullName>
        <shortName evidence="1">Na(+)-NQR subunit C</shortName>
        <shortName evidence="1">Na(+)-translocating NQR subunit C</shortName>
        <ecNumber evidence="1">7.2.1.1</ecNumber>
    </recommendedName>
    <alternativeName>
        <fullName evidence="1">NQR complex subunit C</fullName>
    </alternativeName>
    <alternativeName>
        <fullName evidence="1">NQR-1 subunit C</fullName>
    </alternativeName>
</protein>
<gene>
    <name evidence="1" type="primary">nqrC</name>
    <name type="ordered locus">VP2349</name>
</gene>
<name>NQRC_VIBPA</name>
<dbReference type="EC" id="7.2.1.1" evidence="1"/>
<dbReference type="EMBL" id="BA000031">
    <property type="protein sequence ID" value="BAC60612.1"/>
    <property type="molecule type" value="Genomic_DNA"/>
</dbReference>
<dbReference type="RefSeq" id="NP_798728.1">
    <property type="nucleotide sequence ID" value="NC_004603.1"/>
</dbReference>
<dbReference type="RefSeq" id="WP_005456526.1">
    <property type="nucleotide sequence ID" value="NC_004603.1"/>
</dbReference>
<dbReference type="SMR" id="Q87MA8"/>
<dbReference type="GeneID" id="1189862"/>
<dbReference type="KEGG" id="vpa:VP2349"/>
<dbReference type="PATRIC" id="fig|223926.6.peg.2252"/>
<dbReference type="eggNOG" id="COG2869">
    <property type="taxonomic scope" value="Bacteria"/>
</dbReference>
<dbReference type="HOGENOM" id="CLU_077882_0_1_6"/>
<dbReference type="Proteomes" id="UP000002493">
    <property type="component" value="Chromosome 1"/>
</dbReference>
<dbReference type="GO" id="GO:0005886">
    <property type="term" value="C:plasma membrane"/>
    <property type="evidence" value="ECO:0007669"/>
    <property type="project" value="UniProtKB-SubCell"/>
</dbReference>
<dbReference type="GO" id="GO:0010181">
    <property type="term" value="F:FMN binding"/>
    <property type="evidence" value="ECO:0007669"/>
    <property type="project" value="UniProtKB-UniRule"/>
</dbReference>
<dbReference type="GO" id="GO:0016655">
    <property type="term" value="F:oxidoreductase activity, acting on NAD(P)H, quinone or similar compound as acceptor"/>
    <property type="evidence" value="ECO:0007669"/>
    <property type="project" value="UniProtKB-UniRule"/>
</dbReference>
<dbReference type="GO" id="GO:0006814">
    <property type="term" value="P:sodium ion transport"/>
    <property type="evidence" value="ECO:0007669"/>
    <property type="project" value="UniProtKB-UniRule"/>
</dbReference>
<dbReference type="HAMAP" id="MF_00427">
    <property type="entry name" value="NqrC"/>
    <property type="match status" value="1"/>
</dbReference>
<dbReference type="InterPro" id="IPR007329">
    <property type="entry name" value="FMN-bd"/>
</dbReference>
<dbReference type="InterPro" id="IPR010204">
    <property type="entry name" value="NqrC"/>
</dbReference>
<dbReference type="NCBIfam" id="TIGR01938">
    <property type="entry name" value="nqrC"/>
    <property type="match status" value="1"/>
</dbReference>
<dbReference type="NCBIfam" id="NF003746">
    <property type="entry name" value="PRK05346.1-1"/>
    <property type="match status" value="1"/>
</dbReference>
<dbReference type="NCBIfam" id="NF003749">
    <property type="entry name" value="PRK05346.1-5"/>
    <property type="match status" value="1"/>
</dbReference>
<dbReference type="PANTHER" id="PTHR37838">
    <property type="entry name" value="NA(+)-TRANSLOCATING NADH-QUINONE REDUCTASE SUBUNIT C"/>
    <property type="match status" value="1"/>
</dbReference>
<dbReference type="PANTHER" id="PTHR37838:SF1">
    <property type="entry name" value="NA(+)-TRANSLOCATING NADH-QUINONE REDUCTASE SUBUNIT C"/>
    <property type="match status" value="1"/>
</dbReference>
<dbReference type="Pfam" id="PF04205">
    <property type="entry name" value="FMN_bind"/>
    <property type="match status" value="1"/>
</dbReference>
<dbReference type="PIRSF" id="PIRSF009437">
    <property type="entry name" value="NQR-1_subunit_C"/>
    <property type="match status" value="1"/>
</dbReference>
<dbReference type="SMART" id="SM00900">
    <property type="entry name" value="FMN_bind"/>
    <property type="match status" value="1"/>
</dbReference>
<sequence length="261" mass="27690">MASNNDSIKKTLGVVIGLSLVCSIIVSTAAVGLRDKQKANAVLDKQSKIVEVAGIEANGKKVPELYAEYIEPRLVDFATGEFVEEAADGSKAANYDQRKAAKDNATSIKLTAEQDKAKIIRRANTGIVYLVKNGDDVSKVIIPVHGNGLWSMMYAFVAVETDGNTVSGITYYEQGETPGLGGEVENPSWRAQWVGKKLFDENHKPAIKVVKGGAPAGSEHGVDGLSGATLTGNGVQGTFDFWLGDMGFGPFLAKVRDGGLN</sequence>
<reference key="1">
    <citation type="journal article" date="2003" name="Lancet">
        <title>Genome sequence of Vibrio parahaemolyticus: a pathogenic mechanism distinct from that of V. cholerae.</title>
        <authorList>
            <person name="Makino K."/>
            <person name="Oshima K."/>
            <person name="Kurokawa K."/>
            <person name="Yokoyama K."/>
            <person name="Uda T."/>
            <person name="Tagomori K."/>
            <person name="Iijima Y."/>
            <person name="Najima M."/>
            <person name="Nakano M."/>
            <person name="Yamashita A."/>
            <person name="Kubota Y."/>
            <person name="Kimura S."/>
            <person name="Yasunaga T."/>
            <person name="Honda T."/>
            <person name="Shinagawa H."/>
            <person name="Hattori M."/>
            <person name="Iida T."/>
        </authorList>
    </citation>
    <scope>NUCLEOTIDE SEQUENCE [LARGE SCALE GENOMIC DNA]</scope>
    <source>
        <strain>RIMD 2210633</strain>
    </source>
</reference>
<feature type="chain" id="PRO_0000214225" description="Na(+)-translocating NADH-quinone reductase subunit C">
    <location>
        <begin position="1"/>
        <end position="261"/>
    </location>
</feature>
<feature type="transmembrane region" description="Helical" evidence="1">
    <location>
        <begin position="12"/>
        <end position="32"/>
    </location>
</feature>
<feature type="modified residue" description="FMN phosphoryl threonine" evidence="1">
    <location>
        <position position="229"/>
    </location>
</feature>
<accession>Q87MA8</accession>